<protein>
    <recommendedName>
        <fullName evidence="1">Ribosome-binding factor A</fullName>
    </recommendedName>
</protein>
<gene>
    <name evidence="1" type="primary">rbfA</name>
    <name type="ordered locus">CT0242</name>
</gene>
<keyword id="KW-0963">Cytoplasm</keyword>
<keyword id="KW-1185">Reference proteome</keyword>
<keyword id="KW-0690">Ribosome biogenesis</keyword>
<dbReference type="EMBL" id="AE006470">
    <property type="protein sequence ID" value="AAM71488.1"/>
    <property type="molecule type" value="Genomic_DNA"/>
</dbReference>
<dbReference type="RefSeq" id="NP_661146.1">
    <property type="nucleotide sequence ID" value="NC_002932.3"/>
</dbReference>
<dbReference type="RefSeq" id="WP_010931934.1">
    <property type="nucleotide sequence ID" value="NC_002932.3"/>
</dbReference>
<dbReference type="SMR" id="Q8KFT0"/>
<dbReference type="STRING" id="194439.CT0242"/>
<dbReference type="EnsemblBacteria" id="AAM71488">
    <property type="protein sequence ID" value="AAM71488"/>
    <property type="gene ID" value="CT0242"/>
</dbReference>
<dbReference type="KEGG" id="cte:CT0242"/>
<dbReference type="PATRIC" id="fig|194439.7.peg.234"/>
<dbReference type="eggNOG" id="COG0858">
    <property type="taxonomic scope" value="Bacteria"/>
</dbReference>
<dbReference type="HOGENOM" id="CLU_089475_4_0_10"/>
<dbReference type="OrthoDB" id="9811910at2"/>
<dbReference type="Proteomes" id="UP000001007">
    <property type="component" value="Chromosome"/>
</dbReference>
<dbReference type="GO" id="GO:0005829">
    <property type="term" value="C:cytosol"/>
    <property type="evidence" value="ECO:0007669"/>
    <property type="project" value="TreeGrafter"/>
</dbReference>
<dbReference type="GO" id="GO:0043024">
    <property type="term" value="F:ribosomal small subunit binding"/>
    <property type="evidence" value="ECO:0007669"/>
    <property type="project" value="TreeGrafter"/>
</dbReference>
<dbReference type="GO" id="GO:0030490">
    <property type="term" value="P:maturation of SSU-rRNA"/>
    <property type="evidence" value="ECO:0007669"/>
    <property type="project" value="UniProtKB-UniRule"/>
</dbReference>
<dbReference type="Gene3D" id="3.30.300.20">
    <property type="match status" value="1"/>
</dbReference>
<dbReference type="HAMAP" id="MF_00003">
    <property type="entry name" value="RbfA"/>
    <property type="match status" value="1"/>
</dbReference>
<dbReference type="InterPro" id="IPR015946">
    <property type="entry name" value="KH_dom-like_a/b"/>
</dbReference>
<dbReference type="InterPro" id="IPR000238">
    <property type="entry name" value="RbfA"/>
</dbReference>
<dbReference type="InterPro" id="IPR023799">
    <property type="entry name" value="RbfA_dom_sf"/>
</dbReference>
<dbReference type="NCBIfam" id="TIGR00082">
    <property type="entry name" value="rbfA"/>
    <property type="match status" value="1"/>
</dbReference>
<dbReference type="PANTHER" id="PTHR33515">
    <property type="entry name" value="RIBOSOME-BINDING FACTOR A, CHLOROPLASTIC-RELATED"/>
    <property type="match status" value="1"/>
</dbReference>
<dbReference type="PANTHER" id="PTHR33515:SF1">
    <property type="entry name" value="RIBOSOME-BINDING FACTOR A, CHLOROPLASTIC-RELATED"/>
    <property type="match status" value="1"/>
</dbReference>
<dbReference type="Pfam" id="PF02033">
    <property type="entry name" value="RBFA"/>
    <property type="match status" value="1"/>
</dbReference>
<dbReference type="SUPFAM" id="SSF89919">
    <property type="entry name" value="Ribosome-binding factor A, RbfA"/>
    <property type="match status" value="1"/>
</dbReference>
<name>RBFA_CHLTE</name>
<comment type="function">
    <text evidence="1">One of several proteins that assist in the late maturation steps of the functional core of the 30S ribosomal subunit. Associates with free 30S ribosomal subunits (but not with 30S subunits that are part of 70S ribosomes or polysomes). Required for efficient processing of 16S rRNA. May interact with the 5'-terminal helix region of 16S rRNA.</text>
</comment>
<comment type="subunit">
    <text evidence="1">Monomer. Binds 30S ribosomal subunits, but not 50S ribosomal subunits or 70S ribosomes.</text>
</comment>
<comment type="subcellular location">
    <subcellularLocation>
        <location evidence="1">Cytoplasm</location>
    </subcellularLocation>
</comment>
<comment type="similarity">
    <text evidence="1">Belongs to the RbfA family.</text>
</comment>
<accession>Q8KFT0</accession>
<organism>
    <name type="scientific">Chlorobaculum tepidum (strain ATCC 49652 / DSM 12025 / NBRC 103806 / TLS)</name>
    <name type="common">Chlorobium tepidum</name>
    <dbReference type="NCBI Taxonomy" id="194439"/>
    <lineage>
        <taxon>Bacteria</taxon>
        <taxon>Pseudomonadati</taxon>
        <taxon>Chlorobiota</taxon>
        <taxon>Chlorobiia</taxon>
        <taxon>Chlorobiales</taxon>
        <taxon>Chlorobiaceae</taxon>
        <taxon>Chlorobaculum</taxon>
    </lineage>
</organism>
<evidence type="ECO:0000255" key="1">
    <source>
        <dbReference type="HAMAP-Rule" id="MF_00003"/>
    </source>
</evidence>
<feature type="chain" id="PRO_0000102646" description="Ribosome-binding factor A">
    <location>
        <begin position="1"/>
        <end position="120"/>
    </location>
</feature>
<reference key="1">
    <citation type="journal article" date="2002" name="Proc. Natl. Acad. Sci. U.S.A.">
        <title>The complete genome sequence of Chlorobium tepidum TLS, a photosynthetic, anaerobic, green-sulfur bacterium.</title>
        <authorList>
            <person name="Eisen J.A."/>
            <person name="Nelson K.E."/>
            <person name="Paulsen I.T."/>
            <person name="Heidelberg J.F."/>
            <person name="Wu M."/>
            <person name="Dodson R.J."/>
            <person name="DeBoy R.T."/>
            <person name="Gwinn M.L."/>
            <person name="Nelson W.C."/>
            <person name="Haft D.H."/>
            <person name="Hickey E.K."/>
            <person name="Peterson J.D."/>
            <person name="Durkin A.S."/>
            <person name="Kolonay J.F."/>
            <person name="Yang F."/>
            <person name="Holt I.E."/>
            <person name="Umayam L.A."/>
            <person name="Mason T.M."/>
            <person name="Brenner M."/>
            <person name="Shea T.P."/>
            <person name="Parksey D.S."/>
            <person name="Nierman W.C."/>
            <person name="Feldblyum T.V."/>
            <person name="Hansen C.L."/>
            <person name="Craven M.B."/>
            <person name="Radune D."/>
            <person name="Vamathevan J.J."/>
            <person name="Khouri H.M."/>
            <person name="White O."/>
            <person name="Gruber T.M."/>
            <person name="Ketchum K.A."/>
            <person name="Venter J.C."/>
            <person name="Tettelin H."/>
            <person name="Bryant D.A."/>
            <person name="Fraser C.M."/>
        </authorList>
    </citation>
    <scope>NUCLEOTIDE SEQUENCE [LARGE SCALE GENOMIC DNA]</scope>
    <source>
        <strain>ATCC 49652 / DSM 12025 / NBRC 103806 / TLS</strain>
    </source>
</reference>
<proteinExistence type="inferred from homology"/>
<sequence>MSIRTDKVSSLLQRELSAIFEKELPRSGPLVTVTEVRMTADLGIARVYVSVIGSEAQRAEVMEYLDAENKMIRKTLSAKIRHQFRRIPELEFYEDRLFEQANRIEQLLKSVKPARDEEQH</sequence>